<evidence type="ECO:0000269" key="1">
    <source>
    </source>
</evidence>
<evidence type="ECO:0000305" key="2"/>
<organism>
    <name type="scientific">Schizosaccharomyces pombe (strain 972 / ATCC 24843)</name>
    <name type="common">Fission yeast</name>
    <dbReference type="NCBI Taxonomy" id="284812"/>
    <lineage>
        <taxon>Eukaryota</taxon>
        <taxon>Fungi</taxon>
        <taxon>Dikarya</taxon>
        <taxon>Ascomycota</taxon>
        <taxon>Taphrinomycotina</taxon>
        <taxon>Schizosaccharomycetes</taxon>
        <taxon>Schizosaccharomycetales</taxon>
        <taxon>Schizosaccharomycetaceae</taxon>
        <taxon>Schizosaccharomyces</taxon>
    </lineage>
</organism>
<name>YKK1_SCHPO</name>
<proteinExistence type="inferred from homology"/>
<comment type="subcellular location">
    <subcellularLocation>
        <location evidence="1">Mitochondrion</location>
    </subcellularLocation>
</comment>
<comment type="similarity">
    <text evidence="2">Belongs to the zinc-containing alcohol dehydrogenase family. Quinone oxidoreductase subfamily.</text>
</comment>
<dbReference type="EC" id="1.-.-.-"/>
<dbReference type="EMBL" id="CU329670">
    <property type="protein sequence ID" value="CAB83005.1"/>
    <property type="molecule type" value="Genomic_DNA"/>
</dbReference>
<dbReference type="RefSeq" id="NP_593982.1">
    <property type="nucleotide sequence ID" value="NM_001019408.2"/>
</dbReference>
<dbReference type="SMR" id="Q9P7F4"/>
<dbReference type="BioGRID" id="278277">
    <property type="interactions" value="6"/>
</dbReference>
<dbReference type="FunCoup" id="Q9P7F4">
    <property type="interactions" value="11"/>
</dbReference>
<dbReference type="STRING" id="284812.Q9P7F4"/>
<dbReference type="iPTMnet" id="Q9P7F4"/>
<dbReference type="PaxDb" id="4896-SPAC2E1P3.01.1"/>
<dbReference type="EnsemblFungi" id="SPAC2E1P3.01.1">
    <property type="protein sequence ID" value="SPAC2E1P3.01.1:pep"/>
    <property type="gene ID" value="SPAC2E1P3.01"/>
</dbReference>
<dbReference type="KEGG" id="spo:2541784"/>
<dbReference type="PomBase" id="SPAC2E1P3.01"/>
<dbReference type="VEuPathDB" id="FungiDB:SPAC2E1P3.01"/>
<dbReference type="eggNOG" id="KOG1198">
    <property type="taxonomic scope" value="Eukaryota"/>
</dbReference>
<dbReference type="HOGENOM" id="CLU_026673_16_1_1"/>
<dbReference type="InParanoid" id="Q9P7F4"/>
<dbReference type="OMA" id="CIADERI"/>
<dbReference type="PhylomeDB" id="Q9P7F4"/>
<dbReference type="PRO" id="PR:Q9P7F4"/>
<dbReference type="Proteomes" id="UP000002485">
    <property type="component" value="Chromosome I"/>
</dbReference>
<dbReference type="GO" id="GO:0005739">
    <property type="term" value="C:mitochondrion"/>
    <property type="evidence" value="ECO:0007005"/>
    <property type="project" value="PomBase"/>
</dbReference>
<dbReference type="GO" id="GO:0016651">
    <property type="term" value="F:oxidoreductase activity, acting on NAD(P)H"/>
    <property type="evidence" value="ECO:0007669"/>
    <property type="project" value="InterPro"/>
</dbReference>
<dbReference type="GO" id="GO:0008270">
    <property type="term" value="F:zinc ion binding"/>
    <property type="evidence" value="ECO:0000255"/>
    <property type="project" value="PomBase"/>
</dbReference>
<dbReference type="CDD" id="cd08249">
    <property type="entry name" value="enoyl_reductase_like"/>
    <property type="match status" value="1"/>
</dbReference>
<dbReference type="Gene3D" id="3.90.180.10">
    <property type="entry name" value="Medium-chain alcohol dehydrogenases, catalytic domain"/>
    <property type="match status" value="1"/>
</dbReference>
<dbReference type="Gene3D" id="3.40.50.720">
    <property type="entry name" value="NAD(P)-binding Rossmann-like Domain"/>
    <property type="match status" value="1"/>
</dbReference>
<dbReference type="InterPro" id="IPR013149">
    <property type="entry name" value="ADH-like_C"/>
</dbReference>
<dbReference type="InterPro" id="IPR011032">
    <property type="entry name" value="GroES-like_sf"/>
</dbReference>
<dbReference type="InterPro" id="IPR036291">
    <property type="entry name" value="NAD(P)-bd_dom_sf"/>
</dbReference>
<dbReference type="InterPro" id="IPR020843">
    <property type="entry name" value="PKS_ER"/>
</dbReference>
<dbReference type="InterPro" id="IPR047122">
    <property type="entry name" value="Trans-enoyl_RdTase-like"/>
</dbReference>
<dbReference type="PANTHER" id="PTHR45348">
    <property type="entry name" value="HYPOTHETICAL OXIDOREDUCTASE (EUROFUNG)"/>
    <property type="match status" value="1"/>
</dbReference>
<dbReference type="PANTHER" id="PTHR45348:SF2">
    <property type="entry name" value="ZINC-TYPE ALCOHOL DEHYDROGENASE-LIKE PROTEIN C2E1P3.01"/>
    <property type="match status" value="1"/>
</dbReference>
<dbReference type="Pfam" id="PF00107">
    <property type="entry name" value="ADH_zinc_N"/>
    <property type="match status" value="1"/>
</dbReference>
<dbReference type="SMART" id="SM00829">
    <property type="entry name" value="PKS_ER"/>
    <property type="match status" value="1"/>
</dbReference>
<dbReference type="SUPFAM" id="SSF50129">
    <property type="entry name" value="GroES-like"/>
    <property type="match status" value="1"/>
</dbReference>
<dbReference type="SUPFAM" id="SSF51735">
    <property type="entry name" value="NAD(P)-binding Rossmann-fold domains"/>
    <property type="match status" value="1"/>
</dbReference>
<accession>Q9P7F4</accession>
<gene>
    <name type="ORF">SPAC2E1P3.01</name>
</gene>
<sequence>MKAVIADGQNGVEVISDAPKPTPEKGEFLGRVIRVAFNPIDWKTLYNASIEKGTVGGTDFVAVVEDVGEGVDRSKYIGATVSGWAPGPLDGSNAAWREYITLDVNLVYFVPKNITPSQAATLPLTFTTASQGLNQYLGLPLPPTDGSKNSAQQKWVLVWSGSSSVGQYVVQLAHHAGYKVIATCSPHNFDWIKKLGADFTVDYHDPNVVEIIKKATDDSVFYGFDAASFPETSTLAVKAFSSKVKDGKLINILSSPPSPRSEVKIIGIIDYSLFNREFNFFGNKIEPIQASYDHAVEVYKKLTGWLQEGVIIPNRVKEFDGGLQAIPKALREFASGKHSAVKFVVRID</sequence>
<keyword id="KW-0496">Mitochondrion</keyword>
<keyword id="KW-0560">Oxidoreductase</keyword>
<keyword id="KW-1185">Reference proteome</keyword>
<protein>
    <recommendedName>
        <fullName>Zinc-type alcohol dehydrogenase-like protein C2E1P3.01</fullName>
        <ecNumber>1.-.-.-</ecNumber>
    </recommendedName>
</protein>
<reference key="1">
    <citation type="journal article" date="2002" name="Nature">
        <title>The genome sequence of Schizosaccharomyces pombe.</title>
        <authorList>
            <person name="Wood V."/>
            <person name="Gwilliam R."/>
            <person name="Rajandream M.A."/>
            <person name="Lyne M.H."/>
            <person name="Lyne R."/>
            <person name="Stewart A."/>
            <person name="Sgouros J.G."/>
            <person name="Peat N."/>
            <person name="Hayles J."/>
            <person name="Baker S.G."/>
            <person name="Basham D."/>
            <person name="Bowman S."/>
            <person name="Brooks K."/>
            <person name="Brown D."/>
            <person name="Brown S."/>
            <person name="Chillingworth T."/>
            <person name="Churcher C.M."/>
            <person name="Collins M."/>
            <person name="Connor R."/>
            <person name="Cronin A."/>
            <person name="Davis P."/>
            <person name="Feltwell T."/>
            <person name="Fraser A."/>
            <person name="Gentles S."/>
            <person name="Goble A."/>
            <person name="Hamlin N."/>
            <person name="Harris D.E."/>
            <person name="Hidalgo J."/>
            <person name="Hodgson G."/>
            <person name="Holroyd S."/>
            <person name="Hornsby T."/>
            <person name="Howarth S."/>
            <person name="Huckle E.J."/>
            <person name="Hunt S."/>
            <person name="Jagels K."/>
            <person name="James K.D."/>
            <person name="Jones L."/>
            <person name="Jones M."/>
            <person name="Leather S."/>
            <person name="McDonald S."/>
            <person name="McLean J."/>
            <person name="Mooney P."/>
            <person name="Moule S."/>
            <person name="Mungall K.L."/>
            <person name="Murphy L.D."/>
            <person name="Niblett D."/>
            <person name="Odell C."/>
            <person name="Oliver K."/>
            <person name="O'Neil S."/>
            <person name="Pearson D."/>
            <person name="Quail M.A."/>
            <person name="Rabbinowitsch E."/>
            <person name="Rutherford K.M."/>
            <person name="Rutter S."/>
            <person name="Saunders D."/>
            <person name="Seeger K."/>
            <person name="Sharp S."/>
            <person name="Skelton J."/>
            <person name="Simmonds M.N."/>
            <person name="Squares R."/>
            <person name="Squares S."/>
            <person name="Stevens K."/>
            <person name="Taylor K."/>
            <person name="Taylor R.G."/>
            <person name="Tivey A."/>
            <person name="Walsh S.V."/>
            <person name="Warren T."/>
            <person name="Whitehead S."/>
            <person name="Woodward J.R."/>
            <person name="Volckaert G."/>
            <person name="Aert R."/>
            <person name="Robben J."/>
            <person name="Grymonprez B."/>
            <person name="Weltjens I."/>
            <person name="Vanstreels E."/>
            <person name="Rieger M."/>
            <person name="Schaefer M."/>
            <person name="Mueller-Auer S."/>
            <person name="Gabel C."/>
            <person name="Fuchs M."/>
            <person name="Duesterhoeft A."/>
            <person name="Fritzc C."/>
            <person name="Holzer E."/>
            <person name="Moestl D."/>
            <person name="Hilbert H."/>
            <person name="Borzym K."/>
            <person name="Langer I."/>
            <person name="Beck A."/>
            <person name="Lehrach H."/>
            <person name="Reinhardt R."/>
            <person name="Pohl T.M."/>
            <person name="Eger P."/>
            <person name="Zimmermann W."/>
            <person name="Wedler H."/>
            <person name="Wambutt R."/>
            <person name="Purnelle B."/>
            <person name="Goffeau A."/>
            <person name="Cadieu E."/>
            <person name="Dreano S."/>
            <person name="Gloux S."/>
            <person name="Lelaure V."/>
            <person name="Mottier S."/>
            <person name="Galibert F."/>
            <person name="Aves S.J."/>
            <person name="Xiang Z."/>
            <person name="Hunt C."/>
            <person name="Moore K."/>
            <person name="Hurst S.M."/>
            <person name="Lucas M."/>
            <person name="Rochet M."/>
            <person name="Gaillardin C."/>
            <person name="Tallada V.A."/>
            <person name="Garzon A."/>
            <person name="Thode G."/>
            <person name="Daga R.R."/>
            <person name="Cruzado L."/>
            <person name="Jimenez J."/>
            <person name="Sanchez M."/>
            <person name="del Rey F."/>
            <person name="Benito J."/>
            <person name="Dominguez A."/>
            <person name="Revuelta J.L."/>
            <person name="Moreno S."/>
            <person name="Armstrong J."/>
            <person name="Forsburg S.L."/>
            <person name="Cerutti L."/>
            <person name="Lowe T."/>
            <person name="McCombie W.R."/>
            <person name="Paulsen I."/>
            <person name="Potashkin J."/>
            <person name="Shpakovski G.V."/>
            <person name="Ussery D."/>
            <person name="Barrell B.G."/>
            <person name="Nurse P."/>
        </authorList>
    </citation>
    <scope>NUCLEOTIDE SEQUENCE [LARGE SCALE GENOMIC DNA]</scope>
    <source>
        <strain>972 / ATCC 24843</strain>
    </source>
</reference>
<reference key="2">
    <citation type="journal article" date="2006" name="Nat. Biotechnol.">
        <title>ORFeome cloning and global analysis of protein localization in the fission yeast Schizosaccharomyces pombe.</title>
        <authorList>
            <person name="Matsuyama A."/>
            <person name="Arai R."/>
            <person name="Yashiroda Y."/>
            <person name="Shirai A."/>
            <person name="Kamata A."/>
            <person name="Sekido S."/>
            <person name="Kobayashi Y."/>
            <person name="Hashimoto A."/>
            <person name="Hamamoto M."/>
            <person name="Hiraoka Y."/>
            <person name="Horinouchi S."/>
            <person name="Yoshida M."/>
        </authorList>
    </citation>
    <scope>SUBCELLULAR LOCATION [LARGE SCALE ANALYSIS]</scope>
</reference>
<feature type="chain" id="PRO_0000339119" description="Zinc-type alcohol dehydrogenase-like protein C2E1P3.01">
    <location>
        <begin position="1"/>
        <end position="348"/>
    </location>
</feature>